<name>RL7_RICBR</name>
<reference key="1">
    <citation type="journal article" date="2006" name="PLoS Genet.">
        <title>Genome sequence of Rickettsia bellii illuminates the role of amoebae in gene exchanges between intracellular pathogens.</title>
        <authorList>
            <person name="Ogata H."/>
            <person name="La Scola B."/>
            <person name="Audic S."/>
            <person name="Renesto P."/>
            <person name="Blanc G."/>
            <person name="Robert C."/>
            <person name="Fournier P.-E."/>
            <person name="Claverie J.-M."/>
            <person name="Raoult D."/>
        </authorList>
    </citation>
    <scope>NUCLEOTIDE SEQUENCE [LARGE SCALE GENOMIC DNA]</scope>
    <source>
        <strain>RML369-C</strain>
    </source>
</reference>
<dbReference type="EMBL" id="CP000087">
    <property type="protein sequence ID" value="ABE05235.1"/>
    <property type="molecule type" value="Genomic_DNA"/>
</dbReference>
<dbReference type="RefSeq" id="WP_011477813.1">
    <property type="nucleotide sequence ID" value="NC_007940.1"/>
</dbReference>
<dbReference type="SMR" id="Q1RHC9"/>
<dbReference type="KEGG" id="rbe:RBE_1154"/>
<dbReference type="eggNOG" id="COG0222">
    <property type="taxonomic scope" value="Bacteria"/>
</dbReference>
<dbReference type="HOGENOM" id="CLU_086499_3_0_5"/>
<dbReference type="OrthoDB" id="9811748at2"/>
<dbReference type="Proteomes" id="UP000001951">
    <property type="component" value="Chromosome"/>
</dbReference>
<dbReference type="GO" id="GO:0005737">
    <property type="term" value="C:cytoplasm"/>
    <property type="evidence" value="ECO:0007669"/>
    <property type="project" value="UniProtKB-ARBA"/>
</dbReference>
<dbReference type="GO" id="GO:1990904">
    <property type="term" value="C:ribonucleoprotein complex"/>
    <property type="evidence" value="ECO:0007669"/>
    <property type="project" value="UniProtKB-KW"/>
</dbReference>
<dbReference type="GO" id="GO:0005840">
    <property type="term" value="C:ribosome"/>
    <property type="evidence" value="ECO:0007669"/>
    <property type="project" value="UniProtKB-KW"/>
</dbReference>
<dbReference type="GO" id="GO:0003729">
    <property type="term" value="F:mRNA binding"/>
    <property type="evidence" value="ECO:0007669"/>
    <property type="project" value="TreeGrafter"/>
</dbReference>
<dbReference type="GO" id="GO:0003735">
    <property type="term" value="F:structural constituent of ribosome"/>
    <property type="evidence" value="ECO:0007669"/>
    <property type="project" value="InterPro"/>
</dbReference>
<dbReference type="GO" id="GO:0006412">
    <property type="term" value="P:translation"/>
    <property type="evidence" value="ECO:0007669"/>
    <property type="project" value="UniProtKB-UniRule"/>
</dbReference>
<dbReference type="CDD" id="cd00387">
    <property type="entry name" value="Ribosomal_L7_L12"/>
    <property type="match status" value="1"/>
</dbReference>
<dbReference type="FunFam" id="3.30.1390.10:FF:000001">
    <property type="entry name" value="50S ribosomal protein L7/L12"/>
    <property type="match status" value="1"/>
</dbReference>
<dbReference type="Gene3D" id="3.30.1390.10">
    <property type="match status" value="1"/>
</dbReference>
<dbReference type="Gene3D" id="1.20.5.710">
    <property type="entry name" value="Single helix bin"/>
    <property type="match status" value="1"/>
</dbReference>
<dbReference type="HAMAP" id="MF_00368">
    <property type="entry name" value="Ribosomal_bL12"/>
    <property type="match status" value="1"/>
</dbReference>
<dbReference type="InterPro" id="IPR000206">
    <property type="entry name" value="Ribosomal_bL12"/>
</dbReference>
<dbReference type="InterPro" id="IPR013823">
    <property type="entry name" value="Ribosomal_bL12_C"/>
</dbReference>
<dbReference type="InterPro" id="IPR014719">
    <property type="entry name" value="Ribosomal_bL12_C/ClpS-like"/>
</dbReference>
<dbReference type="InterPro" id="IPR008932">
    <property type="entry name" value="Ribosomal_bL12_oligo"/>
</dbReference>
<dbReference type="InterPro" id="IPR036235">
    <property type="entry name" value="Ribosomal_bL12_oligo_N_sf"/>
</dbReference>
<dbReference type="NCBIfam" id="TIGR00855">
    <property type="entry name" value="L12"/>
    <property type="match status" value="1"/>
</dbReference>
<dbReference type="PANTHER" id="PTHR45987">
    <property type="entry name" value="39S RIBOSOMAL PROTEIN L12"/>
    <property type="match status" value="1"/>
</dbReference>
<dbReference type="PANTHER" id="PTHR45987:SF4">
    <property type="entry name" value="LARGE RIBOSOMAL SUBUNIT PROTEIN BL12M"/>
    <property type="match status" value="1"/>
</dbReference>
<dbReference type="Pfam" id="PF00542">
    <property type="entry name" value="Ribosomal_L12"/>
    <property type="match status" value="1"/>
</dbReference>
<dbReference type="Pfam" id="PF16320">
    <property type="entry name" value="Ribosomal_L12_N"/>
    <property type="match status" value="1"/>
</dbReference>
<dbReference type="SUPFAM" id="SSF54736">
    <property type="entry name" value="ClpS-like"/>
    <property type="match status" value="1"/>
</dbReference>
<dbReference type="SUPFAM" id="SSF48300">
    <property type="entry name" value="Ribosomal protein L7/12, oligomerisation (N-terminal) domain"/>
    <property type="match status" value="1"/>
</dbReference>
<comment type="function">
    <text evidence="1">Forms part of the ribosomal stalk which helps the ribosome interact with GTP-bound translation factors. Is thus essential for accurate translation.</text>
</comment>
<comment type="subunit">
    <text evidence="1">Homodimer. Part of the ribosomal stalk of the 50S ribosomal subunit. Forms a multimeric L10(L12)X complex, where L10 forms an elongated spine to which 2 to 4 L12 dimers bind in a sequential fashion. Binds GTP-bound translation factors.</text>
</comment>
<comment type="similarity">
    <text evidence="1">Belongs to the bacterial ribosomal protein bL12 family.</text>
</comment>
<protein>
    <recommendedName>
        <fullName evidence="1">Large ribosomal subunit protein bL12</fullName>
    </recommendedName>
    <alternativeName>
        <fullName evidence="2">50S ribosomal protein L7/L12</fullName>
    </alternativeName>
</protein>
<feature type="chain" id="PRO_0000243485" description="Large ribosomal subunit protein bL12">
    <location>
        <begin position="1"/>
        <end position="123"/>
    </location>
</feature>
<sequence length="123" mass="12838">MADLAKIEEQLSSLTLMQAAELVKMLEEKWGVSAAAPVAVAAAAAPAAEAAAEKTDFEVVLASSGDKKVEVIKVVKEITGLGLIEAKKLVDEAPKPIKSNVKKAEAEEIKSKLEAAGAKVELK</sequence>
<evidence type="ECO:0000255" key="1">
    <source>
        <dbReference type="HAMAP-Rule" id="MF_00368"/>
    </source>
</evidence>
<evidence type="ECO:0000305" key="2"/>
<accession>Q1RHC9</accession>
<keyword id="KW-0687">Ribonucleoprotein</keyword>
<keyword id="KW-0689">Ribosomal protein</keyword>
<organism>
    <name type="scientific">Rickettsia bellii (strain RML369-C)</name>
    <dbReference type="NCBI Taxonomy" id="336407"/>
    <lineage>
        <taxon>Bacteria</taxon>
        <taxon>Pseudomonadati</taxon>
        <taxon>Pseudomonadota</taxon>
        <taxon>Alphaproteobacteria</taxon>
        <taxon>Rickettsiales</taxon>
        <taxon>Rickettsiaceae</taxon>
        <taxon>Rickettsieae</taxon>
        <taxon>Rickettsia</taxon>
        <taxon>belli group</taxon>
    </lineage>
</organism>
<proteinExistence type="inferred from homology"/>
<gene>
    <name evidence="1" type="primary">rplL</name>
    <name type="ordered locus">RBE_1154</name>
</gene>